<proteinExistence type="evidence at transcript level"/>
<name>IP5P4_ARATH</name>
<sequence length="547" mass="62177">MGDGNLKKSKLSWPKTLVKKWLNIKSKSEDFHADDLDRGEGGGDWRNNVIEREEACSVRKSKTETRSKRNSGRARRNKLDVDPPLDHLRVFTATWNVAGKSPPSYLNLDDWLHTSPPSDIYVLGFQEIVPLNAGNVLGTEDNGPARKWVSLIRRTLNSLPGGSCQTPSPVPHPVAELDSDFEGDSAAGANSLFYHRSRSMRMDASASSLPQQFDRRFSVCDRFMLGDTPDDFYDQSFRYCSSEDEPADSPCHDHYSPVSRTGSFVADDRDKGRDKSKYCLVASKQMVGIFLTVWVKSDLRDSVNNLKVSCVGRGLMGYLGNKGSISISMSVHQTSFCFVCSHLTSGQKEGDELRRNSDVLEILRKTRFPRVNNAGDDKSPQMISEHDRVIWLGDLNYRIALSYRSAKALVEMRDWRALLEKDQLRIEQRKGCVFEGWKEGTIYFPPTYKYSNNSDIYAGDDRLPKAKRRTPAWCDRILWHGSGISQLSYVRGESRFSDHRPVYSLFSVEIESAYRNRIKKSSSYTSSRIEVEELLPQRYGYSELNPY</sequence>
<evidence type="ECO:0000250" key="1">
    <source>
        <dbReference type="UniProtKB" id="Q84MA2"/>
    </source>
</evidence>
<evidence type="ECO:0000256" key="2">
    <source>
        <dbReference type="SAM" id="MobiDB-lite"/>
    </source>
</evidence>
<evidence type="ECO:0000305" key="3"/>
<evidence type="ECO:0000312" key="4">
    <source>
        <dbReference type="Araport" id="AT3G63240"/>
    </source>
</evidence>
<evidence type="ECO:0000312" key="5">
    <source>
        <dbReference type="EMBL" id="CAB86425.1"/>
    </source>
</evidence>
<dbReference type="EC" id="3.1.3.-" evidence="3"/>
<dbReference type="EMBL" id="AL138648">
    <property type="protein sequence ID" value="CAB86425.1"/>
    <property type="status" value="ALT_SEQ"/>
    <property type="molecule type" value="Genomic_DNA"/>
</dbReference>
<dbReference type="EMBL" id="CP002686">
    <property type="protein sequence ID" value="AEE80454.1"/>
    <property type="molecule type" value="Genomic_DNA"/>
</dbReference>
<dbReference type="EMBL" id="CP002686">
    <property type="protein sequence ID" value="ANM64742.1"/>
    <property type="molecule type" value="Genomic_DNA"/>
</dbReference>
<dbReference type="EMBL" id="AK117957">
    <property type="protein sequence ID" value="BAC42595.1"/>
    <property type="molecule type" value="mRNA"/>
</dbReference>
<dbReference type="EMBL" id="BT005913">
    <property type="protein sequence ID" value="AAO64848.1"/>
    <property type="molecule type" value="mRNA"/>
</dbReference>
<dbReference type="PIR" id="T48113">
    <property type="entry name" value="T48113"/>
</dbReference>
<dbReference type="RefSeq" id="NP_001326750.1">
    <property type="nucleotide sequence ID" value="NM_001340194.1"/>
</dbReference>
<dbReference type="RefSeq" id="NP_191883.2">
    <property type="nucleotide sequence ID" value="NM_116189.4"/>
</dbReference>
<dbReference type="SMR" id="Q8GTS0"/>
<dbReference type="FunCoup" id="Q8GTS0">
    <property type="interactions" value="3110"/>
</dbReference>
<dbReference type="STRING" id="3702.Q8GTS0"/>
<dbReference type="PaxDb" id="3702-AT3G63240.1"/>
<dbReference type="EnsemblPlants" id="AT3G63240.1">
    <property type="protein sequence ID" value="AT3G63240.1"/>
    <property type="gene ID" value="AT3G63240"/>
</dbReference>
<dbReference type="EnsemblPlants" id="AT3G63240.2">
    <property type="protein sequence ID" value="AT3G63240.2"/>
    <property type="gene ID" value="AT3G63240"/>
</dbReference>
<dbReference type="GeneID" id="825499"/>
<dbReference type="Gramene" id="AT3G63240.1">
    <property type="protein sequence ID" value="AT3G63240.1"/>
    <property type="gene ID" value="AT3G63240"/>
</dbReference>
<dbReference type="Gramene" id="AT3G63240.2">
    <property type="protein sequence ID" value="AT3G63240.2"/>
    <property type="gene ID" value="AT3G63240"/>
</dbReference>
<dbReference type="KEGG" id="ath:AT3G63240"/>
<dbReference type="Araport" id="AT3G63240"/>
<dbReference type="TAIR" id="AT3G63240"/>
<dbReference type="eggNOG" id="KOG0565">
    <property type="taxonomic scope" value="Eukaryota"/>
</dbReference>
<dbReference type="HOGENOM" id="CLU_011711_4_0_1"/>
<dbReference type="InParanoid" id="Q8GTS0"/>
<dbReference type="OMA" id="MDNDMLM"/>
<dbReference type="PhylomeDB" id="Q8GTS0"/>
<dbReference type="BioCyc" id="ARA:AT3G63240-MONOMER"/>
<dbReference type="PRO" id="PR:Q8GTS0"/>
<dbReference type="Proteomes" id="UP000006548">
    <property type="component" value="Chromosome 3"/>
</dbReference>
<dbReference type="ExpressionAtlas" id="Q8GTS0">
    <property type="expression patterns" value="baseline and differential"/>
</dbReference>
<dbReference type="GO" id="GO:0004445">
    <property type="term" value="F:inositol-polyphosphate 5-phosphatase activity"/>
    <property type="evidence" value="ECO:0007669"/>
    <property type="project" value="InterPro"/>
</dbReference>
<dbReference type="GO" id="GO:0046856">
    <property type="term" value="P:phosphatidylinositol dephosphorylation"/>
    <property type="evidence" value="ECO:0007669"/>
    <property type="project" value="InterPro"/>
</dbReference>
<dbReference type="Gene3D" id="3.60.10.10">
    <property type="entry name" value="Endonuclease/exonuclease/phosphatase"/>
    <property type="match status" value="2"/>
</dbReference>
<dbReference type="InterPro" id="IPR036691">
    <property type="entry name" value="Endo/exonu/phosph_ase_sf"/>
</dbReference>
<dbReference type="InterPro" id="IPR045849">
    <property type="entry name" value="IP5P_plant"/>
</dbReference>
<dbReference type="InterPro" id="IPR000300">
    <property type="entry name" value="IPPc"/>
</dbReference>
<dbReference type="PANTHER" id="PTHR45666:SF22">
    <property type="entry name" value="TYPE I INOSITOL POLYPHOSPHATE 5-PHOSPHATASE 4"/>
    <property type="match status" value="1"/>
</dbReference>
<dbReference type="PANTHER" id="PTHR45666">
    <property type="entry name" value="TYPE IV INOSITOL POLYPHOSPHATE 5-PHOSPHATASE 9"/>
    <property type="match status" value="1"/>
</dbReference>
<dbReference type="Pfam" id="PF22669">
    <property type="entry name" value="Exo_endo_phos2"/>
    <property type="match status" value="2"/>
</dbReference>
<dbReference type="SMART" id="SM00128">
    <property type="entry name" value="IPPc"/>
    <property type="match status" value="1"/>
</dbReference>
<dbReference type="SUPFAM" id="SSF56219">
    <property type="entry name" value="DNase I-like"/>
    <property type="match status" value="1"/>
</dbReference>
<accession>Q8GTS0</accession>
<accession>Q9M1W5</accession>
<protein>
    <recommendedName>
        <fullName evidence="3">Type I inositol polyphosphate 5-phosphatase 4</fullName>
        <shortName evidence="3">At5PTase4</shortName>
        <ecNumber evidence="3">3.1.3.-</ecNumber>
    </recommendedName>
</protein>
<gene>
    <name evidence="3" type="primary">IP5P4</name>
    <name evidence="4" type="ordered locus">At3g63240</name>
    <name evidence="5" type="ORF">F16M2_90</name>
</gene>
<organism>
    <name type="scientific">Arabidopsis thaliana</name>
    <name type="common">Mouse-ear cress</name>
    <dbReference type="NCBI Taxonomy" id="3702"/>
    <lineage>
        <taxon>Eukaryota</taxon>
        <taxon>Viridiplantae</taxon>
        <taxon>Streptophyta</taxon>
        <taxon>Embryophyta</taxon>
        <taxon>Tracheophyta</taxon>
        <taxon>Spermatophyta</taxon>
        <taxon>Magnoliopsida</taxon>
        <taxon>eudicotyledons</taxon>
        <taxon>Gunneridae</taxon>
        <taxon>Pentapetalae</taxon>
        <taxon>rosids</taxon>
        <taxon>malvids</taxon>
        <taxon>Brassicales</taxon>
        <taxon>Brassicaceae</taxon>
        <taxon>Camelineae</taxon>
        <taxon>Arabidopsis</taxon>
    </lineage>
</organism>
<feature type="chain" id="PRO_0000433255" description="Type I inositol polyphosphate 5-phosphatase 4">
    <location>
        <begin position="1"/>
        <end position="547"/>
    </location>
</feature>
<feature type="region of interest" description="Disordered" evidence="2">
    <location>
        <begin position="56"/>
        <end position="80"/>
    </location>
</feature>
<feature type="region of interest" description="Catalytic 1" evidence="1">
    <location>
        <begin position="387"/>
        <end position="402"/>
    </location>
</feature>
<feature type="region of interest" description="Catalytic 2" evidence="1">
    <location>
        <begin position="467"/>
        <end position="482"/>
    </location>
</feature>
<feature type="compositionally biased region" description="Basic and acidic residues" evidence="2">
    <location>
        <begin position="56"/>
        <end position="67"/>
    </location>
</feature>
<reference key="1">
    <citation type="journal article" date="2000" name="Nature">
        <title>Sequence and analysis of chromosome 3 of the plant Arabidopsis thaliana.</title>
        <authorList>
            <person name="Salanoubat M."/>
            <person name="Lemcke K."/>
            <person name="Rieger M."/>
            <person name="Ansorge W."/>
            <person name="Unseld M."/>
            <person name="Fartmann B."/>
            <person name="Valle G."/>
            <person name="Bloecker H."/>
            <person name="Perez-Alonso M."/>
            <person name="Obermaier B."/>
            <person name="Delseny M."/>
            <person name="Boutry M."/>
            <person name="Grivell L.A."/>
            <person name="Mache R."/>
            <person name="Puigdomenech P."/>
            <person name="De Simone V."/>
            <person name="Choisne N."/>
            <person name="Artiguenave F."/>
            <person name="Robert C."/>
            <person name="Brottier P."/>
            <person name="Wincker P."/>
            <person name="Cattolico L."/>
            <person name="Weissenbach J."/>
            <person name="Saurin W."/>
            <person name="Quetier F."/>
            <person name="Schaefer M."/>
            <person name="Mueller-Auer S."/>
            <person name="Gabel C."/>
            <person name="Fuchs M."/>
            <person name="Benes V."/>
            <person name="Wurmbach E."/>
            <person name="Drzonek H."/>
            <person name="Erfle H."/>
            <person name="Jordan N."/>
            <person name="Bangert S."/>
            <person name="Wiedelmann R."/>
            <person name="Kranz H."/>
            <person name="Voss H."/>
            <person name="Holland R."/>
            <person name="Brandt P."/>
            <person name="Nyakatura G."/>
            <person name="Vezzi A."/>
            <person name="D'Angelo M."/>
            <person name="Pallavicini A."/>
            <person name="Toppo S."/>
            <person name="Simionati B."/>
            <person name="Conrad A."/>
            <person name="Hornischer K."/>
            <person name="Kauer G."/>
            <person name="Loehnert T.-H."/>
            <person name="Nordsiek G."/>
            <person name="Reichelt J."/>
            <person name="Scharfe M."/>
            <person name="Schoen O."/>
            <person name="Bargues M."/>
            <person name="Terol J."/>
            <person name="Climent J."/>
            <person name="Navarro P."/>
            <person name="Collado C."/>
            <person name="Perez-Perez A."/>
            <person name="Ottenwaelder B."/>
            <person name="Duchemin D."/>
            <person name="Cooke R."/>
            <person name="Laudie M."/>
            <person name="Berger-Llauro C."/>
            <person name="Purnelle B."/>
            <person name="Masuy D."/>
            <person name="de Haan M."/>
            <person name="Maarse A.C."/>
            <person name="Alcaraz J.-P."/>
            <person name="Cottet A."/>
            <person name="Casacuberta E."/>
            <person name="Monfort A."/>
            <person name="Argiriou A."/>
            <person name="Flores M."/>
            <person name="Liguori R."/>
            <person name="Vitale D."/>
            <person name="Mannhaupt G."/>
            <person name="Haase D."/>
            <person name="Schoof H."/>
            <person name="Rudd S."/>
            <person name="Zaccaria P."/>
            <person name="Mewes H.-W."/>
            <person name="Mayer K.F.X."/>
            <person name="Kaul S."/>
            <person name="Town C.D."/>
            <person name="Koo H.L."/>
            <person name="Tallon L.J."/>
            <person name="Jenkins J."/>
            <person name="Rooney T."/>
            <person name="Rizzo M."/>
            <person name="Walts A."/>
            <person name="Utterback T."/>
            <person name="Fujii C.Y."/>
            <person name="Shea T.P."/>
            <person name="Creasy T.H."/>
            <person name="Haas B."/>
            <person name="Maiti R."/>
            <person name="Wu D."/>
            <person name="Peterson J."/>
            <person name="Van Aken S."/>
            <person name="Pai G."/>
            <person name="Militscher J."/>
            <person name="Sellers P."/>
            <person name="Gill J.E."/>
            <person name="Feldblyum T.V."/>
            <person name="Preuss D."/>
            <person name="Lin X."/>
            <person name="Nierman W.C."/>
            <person name="Salzberg S.L."/>
            <person name="White O."/>
            <person name="Venter J.C."/>
            <person name="Fraser C.M."/>
            <person name="Kaneko T."/>
            <person name="Nakamura Y."/>
            <person name="Sato S."/>
            <person name="Kato T."/>
            <person name="Asamizu E."/>
            <person name="Sasamoto S."/>
            <person name="Kimura T."/>
            <person name="Idesawa K."/>
            <person name="Kawashima K."/>
            <person name="Kishida Y."/>
            <person name="Kiyokawa C."/>
            <person name="Kohara M."/>
            <person name="Matsumoto M."/>
            <person name="Matsuno A."/>
            <person name="Muraki A."/>
            <person name="Nakayama S."/>
            <person name="Nakazaki N."/>
            <person name="Shinpo S."/>
            <person name="Takeuchi C."/>
            <person name="Wada T."/>
            <person name="Watanabe A."/>
            <person name="Yamada M."/>
            <person name="Yasuda M."/>
            <person name="Tabata S."/>
        </authorList>
    </citation>
    <scope>NUCLEOTIDE SEQUENCE [LARGE SCALE GENOMIC DNA]</scope>
    <source>
        <strain>cv. Columbia</strain>
    </source>
</reference>
<reference key="2">
    <citation type="journal article" date="2017" name="Plant J.">
        <title>Araport11: a complete reannotation of the Arabidopsis thaliana reference genome.</title>
        <authorList>
            <person name="Cheng C.Y."/>
            <person name="Krishnakumar V."/>
            <person name="Chan A.P."/>
            <person name="Thibaud-Nissen F."/>
            <person name="Schobel S."/>
            <person name="Town C.D."/>
        </authorList>
    </citation>
    <scope>GENOME REANNOTATION</scope>
    <source>
        <strain>cv. Columbia</strain>
    </source>
</reference>
<reference key="3">
    <citation type="journal article" date="2002" name="Science">
        <title>Functional annotation of a full-length Arabidopsis cDNA collection.</title>
        <authorList>
            <person name="Seki M."/>
            <person name="Narusaka M."/>
            <person name="Kamiya A."/>
            <person name="Ishida J."/>
            <person name="Satou M."/>
            <person name="Sakurai T."/>
            <person name="Nakajima M."/>
            <person name="Enju A."/>
            <person name="Akiyama K."/>
            <person name="Oono Y."/>
            <person name="Muramatsu M."/>
            <person name="Hayashizaki Y."/>
            <person name="Kawai J."/>
            <person name="Carninci P."/>
            <person name="Itoh M."/>
            <person name="Ishii Y."/>
            <person name="Arakawa T."/>
            <person name="Shibata K."/>
            <person name="Shinagawa A."/>
            <person name="Shinozaki K."/>
        </authorList>
    </citation>
    <scope>NUCLEOTIDE SEQUENCE [LARGE SCALE MRNA]</scope>
    <source>
        <strain>cv. Columbia</strain>
    </source>
</reference>
<reference key="4">
    <citation type="journal article" date="2003" name="Science">
        <title>Empirical analysis of transcriptional activity in the Arabidopsis genome.</title>
        <authorList>
            <person name="Yamada K."/>
            <person name="Lim J."/>
            <person name="Dale J.M."/>
            <person name="Chen H."/>
            <person name="Shinn P."/>
            <person name="Palm C.J."/>
            <person name="Southwick A.M."/>
            <person name="Wu H.C."/>
            <person name="Kim C.J."/>
            <person name="Nguyen M."/>
            <person name="Pham P.K."/>
            <person name="Cheuk R.F."/>
            <person name="Karlin-Newmann G."/>
            <person name="Liu S.X."/>
            <person name="Lam B."/>
            <person name="Sakano H."/>
            <person name="Wu T."/>
            <person name="Yu G."/>
            <person name="Miranda M."/>
            <person name="Quach H.L."/>
            <person name="Tripp M."/>
            <person name="Chang C.H."/>
            <person name="Lee J.M."/>
            <person name="Toriumi M.J."/>
            <person name="Chan M.M."/>
            <person name="Tang C.C."/>
            <person name="Onodera C.S."/>
            <person name="Deng J.M."/>
            <person name="Akiyama K."/>
            <person name="Ansari Y."/>
            <person name="Arakawa T."/>
            <person name="Banh J."/>
            <person name="Banno F."/>
            <person name="Bowser L."/>
            <person name="Brooks S.Y."/>
            <person name="Carninci P."/>
            <person name="Chao Q."/>
            <person name="Choy N."/>
            <person name="Enju A."/>
            <person name="Goldsmith A.D."/>
            <person name="Gurjal M."/>
            <person name="Hansen N.F."/>
            <person name="Hayashizaki Y."/>
            <person name="Johnson-Hopson C."/>
            <person name="Hsuan V.W."/>
            <person name="Iida K."/>
            <person name="Karnes M."/>
            <person name="Khan S."/>
            <person name="Koesema E."/>
            <person name="Ishida J."/>
            <person name="Jiang P.X."/>
            <person name="Jones T."/>
            <person name="Kawai J."/>
            <person name="Kamiya A."/>
            <person name="Meyers C."/>
            <person name="Nakajima M."/>
            <person name="Narusaka M."/>
            <person name="Seki M."/>
            <person name="Sakurai T."/>
            <person name="Satou M."/>
            <person name="Tamse R."/>
            <person name="Vaysberg M."/>
            <person name="Wallender E.K."/>
            <person name="Wong C."/>
            <person name="Yamamura Y."/>
            <person name="Yuan S."/>
            <person name="Shinozaki K."/>
            <person name="Davis R.W."/>
            <person name="Theologis A."/>
            <person name="Ecker J.R."/>
        </authorList>
    </citation>
    <scope>NUCLEOTIDE SEQUENCE [LARGE SCALE MRNA]</scope>
    <source>
        <strain>cv. Columbia</strain>
    </source>
</reference>
<reference key="5">
    <citation type="journal article" date="2001" name="Plant Physiol.">
        <title>Molecular characterization of At5PTase1, an inositol phosphatase capable of terminating inositol trisphosphate signaling.</title>
        <authorList>
            <person name="Berdy S.E."/>
            <person name="Kudla J."/>
            <person name="Gruissem W."/>
            <person name="Gillaspy G.E."/>
        </authorList>
    </citation>
    <scope>GENE FAMILY</scope>
</reference>
<comment type="similarity">
    <text evidence="3">Belongs to the inositol polyphosphate 5-phosphatase family.</text>
</comment>
<comment type="sequence caution" evidence="3">
    <conflict type="erroneous gene model prediction">
        <sequence resource="EMBL-CDS" id="CAB86425"/>
    </conflict>
</comment>
<keyword id="KW-0378">Hydrolase</keyword>
<keyword id="KW-1185">Reference proteome</keyword>